<protein>
    <recommendedName>
        <fullName evidence="2">D-alanine--D-alanine ligase</fullName>
        <ecNumber evidence="2">6.3.2.4</ecNumber>
    </recommendedName>
    <alternativeName>
        <fullName evidence="2">D-Ala-D-Ala ligase</fullName>
    </alternativeName>
    <alternativeName>
        <fullName evidence="2">D-alanylalanine synthetase</fullName>
    </alternativeName>
</protein>
<sequence>METKTKLHVGLLFGGNSSEHDVSKRSAHNIYDAMDKDRYNVSLFLLTRDGFVLSDAASRRVFDGEDEATVAAEEQAKVDASNPLAPIWNLSQAKDIDVFFPIIHGNLGEDGTIQGLFRLLKKPFVGSGVLASAVSFDKDMTKQVLTAHGIRNTKYVVLTPDNRADFDYATIQSRLGDNVFIKPANQGSSVGIHKASNVQEYLDGVADAFRYDYKVLVEQTIDGPQEVEISILGNEQPQASKLGAIRVPESDVFYDYNNKFVDASGVTFEVPVKLSDELTQEITQMGLQTYAALGLKGMARIDYLVSKDGVPYVGEVNTLPGFTNISLYPQLWQATGINYADLIDRLIELALSEFHYQDELAYDFIPLDDHSAASTYKPKA</sequence>
<keyword id="KW-0067">ATP-binding</keyword>
<keyword id="KW-0133">Cell shape</keyword>
<keyword id="KW-0961">Cell wall biogenesis/degradation</keyword>
<keyword id="KW-0963">Cytoplasm</keyword>
<keyword id="KW-0436">Ligase</keyword>
<keyword id="KW-0460">Magnesium</keyword>
<keyword id="KW-0464">Manganese</keyword>
<keyword id="KW-0479">Metal-binding</keyword>
<keyword id="KW-0547">Nucleotide-binding</keyword>
<keyword id="KW-0573">Peptidoglycan synthesis</keyword>
<keyword id="KW-1185">Reference proteome</keyword>
<accession>Q03QZ9</accession>
<comment type="function">
    <text evidence="2">Cell wall formation.</text>
</comment>
<comment type="catalytic activity">
    <reaction evidence="2">
        <text>2 D-alanine + ATP = D-alanyl-D-alanine + ADP + phosphate + H(+)</text>
        <dbReference type="Rhea" id="RHEA:11224"/>
        <dbReference type="ChEBI" id="CHEBI:15378"/>
        <dbReference type="ChEBI" id="CHEBI:30616"/>
        <dbReference type="ChEBI" id="CHEBI:43474"/>
        <dbReference type="ChEBI" id="CHEBI:57416"/>
        <dbReference type="ChEBI" id="CHEBI:57822"/>
        <dbReference type="ChEBI" id="CHEBI:456216"/>
        <dbReference type="EC" id="6.3.2.4"/>
    </reaction>
</comment>
<comment type="cofactor">
    <cofactor evidence="1">
        <name>Mg(2+)</name>
        <dbReference type="ChEBI" id="CHEBI:18420"/>
    </cofactor>
    <cofactor evidence="1">
        <name>Mn(2+)</name>
        <dbReference type="ChEBI" id="CHEBI:29035"/>
    </cofactor>
    <text evidence="1">Binds 2 magnesium or manganese ions per subunit.</text>
</comment>
<comment type="pathway">
    <text evidence="2">Cell wall biogenesis; peptidoglycan biosynthesis.</text>
</comment>
<comment type="subcellular location">
    <subcellularLocation>
        <location evidence="2">Cytoplasm</location>
    </subcellularLocation>
</comment>
<comment type="similarity">
    <text evidence="2">Belongs to the D-alanine--D-alanine ligase family.</text>
</comment>
<gene>
    <name evidence="2" type="primary">ddl</name>
    <name type="ordered locus">LVIS_1268</name>
</gene>
<evidence type="ECO:0000250" key="1"/>
<evidence type="ECO:0000255" key="2">
    <source>
        <dbReference type="HAMAP-Rule" id="MF_00047"/>
    </source>
</evidence>
<organism>
    <name type="scientific">Levilactobacillus brevis (strain ATCC 367 / BCRC 12310 / CIP 105137 / JCM 1170 / LMG 11437 / NCIMB 947 / NCTC 947)</name>
    <name type="common">Lactobacillus brevis</name>
    <dbReference type="NCBI Taxonomy" id="387344"/>
    <lineage>
        <taxon>Bacteria</taxon>
        <taxon>Bacillati</taxon>
        <taxon>Bacillota</taxon>
        <taxon>Bacilli</taxon>
        <taxon>Lactobacillales</taxon>
        <taxon>Lactobacillaceae</taxon>
        <taxon>Levilactobacillus</taxon>
    </lineage>
</organism>
<proteinExistence type="inferred from homology"/>
<feature type="chain" id="PRO_1000030454" description="D-alanine--D-alanine ligase">
    <location>
        <begin position="1"/>
        <end position="380"/>
    </location>
</feature>
<feature type="domain" description="ATP-grasp" evidence="2">
    <location>
        <begin position="142"/>
        <end position="348"/>
    </location>
</feature>
<feature type="binding site" evidence="2">
    <location>
        <begin position="172"/>
        <end position="227"/>
    </location>
    <ligand>
        <name>ATP</name>
        <dbReference type="ChEBI" id="CHEBI:30616"/>
    </ligand>
</feature>
<feature type="binding site" evidence="2">
    <location>
        <position position="302"/>
    </location>
    <ligand>
        <name>Mg(2+)</name>
        <dbReference type="ChEBI" id="CHEBI:18420"/>
        <label>1</label>
    </ligand>
</feature>
<feature type="binding site" evidence="2">
    <location>
        <position position="315"/>
    </location>
    <ligand>
        <name>Mg(2+)</name>
        <dbReference type="ChEBI" id="CHEBI:18420"/>
        <label>1</label>
    </ligand>
</feature>
<feature type="binding site" evidence="2">
    <location>
        <position position="315"/>
    </location>
    <ligand>
        <name>Mg(2+)</name>
        <dbReference type="ChEBI" id="CHEBI:18420"/>
        <label>2</label>
    </ligand>
</feature>
<feature type="binding site" evidence="2">
    <location>
        <position position="317"/>
    </location>
    <ligand>
        <name>Mg(2+)</name>
        <dbReference type="ChEBI" id="CHEBI:18420"/>
        <label>2</label>
    </ligand>
</feature>
<name>DDL_LEVBA</name>
<dbReference type="EC" id="6.3.2.4" evidence="2"/>
<dbReference type="EMBL" id="CP000416">
    <property type="protein sequence ID" value="ABJ64373.1"/>
    <property type="molecule type" value="Genomic_DNA"/>
</dbReference>
<dbReference type="RefSeq" id="WP_011668137.1">
    <property type="nucleotide sequence ID" value="NC_008497.1"/>
</dbReference>
<dbReference type="SMR" id="Q03QZ9"/>
<dbReference type="STRING" id="387344.LVIS_1268"/>
<dbReference type="KEGG" id="lbr:LVIS_1268"/>
<dbReference type="eggNOG" id="COG1181">
    <property type="taxonomic scope" value="Bacteria"/>
</dbReference>
<dbReference type="HOGENOM" id="CLU_039268_0_1_9"/>
<dbReference type="UniPathway" id="UPA00219"/>
<dbReference type="Proteomes" id="UP000001652">
    <property type="component" value="Chromosome"/>
</dbReference>
<dbReference type="GO" id="GO:0005829">
    <property type="term" value="C:cytosol"/>
    <property type="evidence" value="ECO:0007669"/>
    <property type="project" value="TreeGrafter"/>
</dbReference>
<dbReference type="GO" id="GO:0005524">
    <property type="term" value="F:ATP binding"/>
    <property type="evidence" value="ECO:0007669"/>
    <property type="project" value="UniProtKB-KW"/>
</dbReference>
<dbReference type="GO" id="GO:0008716">
    <property type="term" value="F:D-alanine-D-alanine ligase activity"/>
    <property type="evidence" value="ECO:0007669"/>
    <property type="project" value="UniProtKB-UniRule"/>
</dbReference>
<dbReference type="GO" id="GO:0046872">
    <property type="term" value="F:metal ion binding"/>
    <property type="evidence" value="ECO:0007669"/>
    <property type="project" value="UniProtKB-KW"/>
</dbReference>
<dbReference type="GO" id="GO:0071555">
    <property type="term" value="P:cell wall organization"/>
    <property type="evidence" value="ECO:0007669"/>
    <property type="project" value="UniProtKB-KW"/>
</dbReference>
<dbReference type="GO" id="GO:0009252">
    <property type="term" value="P:peptidoglycan biosynthetic process"/>
    <property type="evidence" value="ECO:0007669"/>
    <property type="project" value="UniProtKB-UniRule"/>
</dbReference>
<dbReference type="GO" id="GO:0008360">
    <property type="term" value="P:regulation of cell shape"/>
    <property type="evidence" value="ECO:0007669"/>
    <property type="project" value="UniProtKB-KW"/>
</dbReference>
<dbReference type="Gene3D" id="3.40.50.20">
    <property type="match status" value="1"/>
</dbReference>
<dbReference type="Gene3D" id="3.30.1490.20">
    <property type="entry name" value="ATP-grasp fold, A domain"/>
    <property type="match status" value="1"/>
</dbReference>
<dbReference type="Gene3D" id="3.30.470.20">
    <property type="entry name" value="ATP-grasp fold, B domain"/>
    <property type="match status" value="1"/>
</dbReference>
<dbReference type="HAMAP" id="MF_00047">
    <property type="entry name" value="Dala_Dala_lig"/>
    <property type="match status" value="1"/>
</dbReference>
<dbReference type="InterPro" id="IPR011761">
    <property type="entry name" value="ATP-grasp"/>
</dbReference>
<dbReference type="InterPro" id="IPR013815">
    <property type="entry name" value="ATP_grasp_subdomain_1"/>
</dbReference>
<dbReference type="InterPro" id="IPR000291">
    <property type="entry name" value="D-Ala_lig_Van_CS"/>
</dbReference>
<dbReference type="InterPro" id="IPR005905">
    <property type="entry name" value="D_ala_D_ala"/>
</dbReference>
<dbReference type="InterPro" id="IPR011095">
    <property type="entry name" value="Dala_Dala_lig_C"/>
</dbReference>
<dbReference type="InterPro" id="IPR011127">
    <property type="entry name" value="Dala_Dala_lig_N"/>
</dbReference>
<dbReference type="InterPro" id="IPR016185">
    <property type="entry name" value="PreATP-grasp_dom_sf"/>
</dbReference>
<dbReference type="NCBIfam" id="TIGR01205">
    <property type="entry name" value="D_ala_D_alaTIGR"/>
    <property type="match status" value="1"/>
</dbReference>
<dbReference type="NCBIfam" id="NF002528">
    <property type="entry name" value="PRK01966.1-4"/>
    <property type="match status" value="1"/>
</dbReference>
<dbReference type="PANTHER" id="PTHR23132">
    <property type="entry name" value="D-ALANINE--D-ALANINE LIGASE"/>
    <property type="match status" value="1"/>
</dbReference>
<dbReference type="PANTHER" id="PTHR23132:SF25">
    <property type="entry name" value="D-ALANINE--D-ALANINE LIGASE A"/>
    <property type="match status" value="1"/>
</dbReference>
<dbReference type="Pfam" id="PF07478">
    <property type="entry name" value="Dala_Dala_lig_C"/>
    <property type="match status" value="1"/>
</dbReference>
<dbReference type="Pfam" id="PF01820">
    <property type="entry name" value="Dala_Dala_lig_N"/>
    <property type="match status" value="1"/>
</dbReference>
<dbReference type="PIRSF" id="PIRSF039102">
    <property type="entry name" value="Ddl/VanB"/>
    <property type="match status" value="1"/>
</dbReference>
<dbReference type="SUPFAM" id="SSF56059">
    <property type="entry name" value="Glutathione synthetase ATP-binding domain-like"/>
    <property type="match status" value="1"/>
</dbReference>
<dbReference type="SUPFAM" id="SSF52440">
    <property type="entry name" value="PreATP-grasp domain"/>
    <property type="match status" value="1"/>
</dbReference>
<dbReference type="PROSITE" id="PS50975">
    <property type="entry name" value="ATP_GRASP"/>
    <property type="match status" value="1"/>
</dbReference>
<dbReference type="PROSITE" id="PS00843">
    <property type="entry name" value="DALA_DALA_LIGASE_1"/>
    <property type="match status" value="1"/>
</dbReference>
<dbReference type="PROSITE" id="PS00844">
    <property type="entry name" value="DALA_DALA_LIGASE_2"/>
    <property type="match status" value="1"/>
</dbReference>
<reference key="1">
    <citation type="journal article" date="2006" name="Proc. Natl. Acad. Sci. U.S.A.">
        <title>Comparative genomics of the lactic acid bacteria.</title>
        <authorList>
            <person name="Makarova K.S."/>
            <person name="Slesarev A."/>
            <person name="Wolf Y.I."/>
            <person name="Sorokin A."/>
            <person name="Mirkin B."/>
            <person name="Koonin E.V."/>
            <person name="Pavlov A."/>
            <person name="Pavlova N."/>
            <person name="Karamychev V."/>
            <person name="Polouchine N."/>
            <person name="Shakhova V."/>
            <person name="Grigoriev I."/>
            <person name="Lou Y."/>
            <person name="Rohksar D."/>
            <person name="Lucas S."/>
            <person name="Huang K."/>
            <person name="Goodstein D.M."/>
            <person name="Hawkins T."/>
            <person name="Plengvidhya V."/>
            <person name="Welker D."/>
            <person name="Hughes J."/>
            <person name="Goh Y."/>
            <person name="Benson A."/>
            <person name="Baldwin K."/>
            <person name="Lee J.-H."/>
            <person name="Diaz-Muniz I."/>
            <person name="Dosti B."/>
            <person name="Smeianov V."/>
            <person name="Wechter W."/>
            <person name="Barabote R."/>
            <person name="Lorca G."/>
            <person name="Altermann E."/>
            <person name="Barrangou R."/>
            <person name="Ganesan B."/>
            <person name="Xie Y."/>
            <person name="Rawsthorne H."/>
            <person name="Tamir D."/>
            <person name="Parker C."/>
            <person name="Breidt F."/>
            <person name="Broadbent J.R."/>
            <person name="Hutkins R."/>
            <person name="O'Sullivan D."/>
            <person name="Steele J."/>
            <person name="Unlu G."/>
            <person name="Saier M.H. Jr."/>
            <person name="Klaenhammer T."/>
            <person name="Richardson P."/>
            <person name="Kozyavkin S."/>
            <person name="Weimer B.C."/>
            <person name="Mills D.A."/>
        </authorList>
    </citation>
    <scope>NUCLEOTIDE SEQUENCE [LARGE SCALE GENOMIC DNA]</scope>
    <source>
        <strain>ATCC 367 / BCRC 12310 / CIP 105137 / JCM 1170 / LMG 11437 / NCIMB 947 / NCTC 947</strain>
    </source>
</reference>